<evidence type="ECO:0000250" key="1"/>
<evidence type="ECO:0000255" key="2">
    <source>
        <dbReference type="HAMAP-Rule" id="MF_01344"/>
    </source>
</evidence>
<evidence type="ECO:0000305" key="3"/>
<reference key="1">
    <citation type="journal article" date="2007" name="Theor. Appl. Genet.">
        <title>Complete chloroplast genome sequences of Hordeum vulgare, Sorghum bicolor and Agrostis stolonifera, and comparative analyses with other grass genomes.</title>
        <authorList>
            <person name="Saski C."/>
            <person name="Lee S.-B."/>
            <person name="Fjellheim S."/>
            <person name="Guda C."/>
            <person name="Jansen R.K."/>
            <person name="Luo H."/>
            <person name="Tomkins J."/>
            <person name="Rognli O.A."/>
            <person name="Daniell H."/>
            <person name="Clarke J.L."/>
        </authorList>
    </citation>
    <scope>NUCLEOTIDE SEQUENCE [LARGE SCALE GENOMIC DNA]</scope>
    <source>
        <strain>cv. Morex</strain>
    </source>
</reference>
<reference key="2">
    <citation type="journal article" date="1989" name="Nucleic Acids Res.">
        <title>Nucleotide sequence of the 5.2 kbp barley chloroplast DNA fragment, containing psbB-psbH-petB-petD gene cluster.</title>
        <authorList>
            <person name="Andreeva A.V."/>
            <person name="Buryakova A.A."/>
            <person name="Reverdatto S.V."/>
            <person name="Chakhmakhcheva O.G."/>
            <person name="Efimov V.A."/>
        </authorList>
    </citation>
    <scope>NUCLEOTIDE SEQUENCE [GENOMIC DNA] OF 1-92 (ISOFORMS LONG AND SHORT)</scope>
    <source>
        <strain>cv. Sabarlis</strain>
    </source>
</reference>
<reference key="3">
    <citation type="journal article" date="1991" name="Bioorg. Khim.">
        <title>Photosystem II of rye. Nucleotide sequence of the psbB, psbC, psbE, psbF, psbH genes of rye and chloroplast DNA regions adjacent to them.</title>
        <authorList>
            <person name="Efimov V.A."/>
            <person name="Andreeva A.V."/>
            <person name="Reverdatto S.V."/>
            <person name="Chakhmakhcheva O.G."/>
        </authorList>
    </citation>
    <scope>NUCLEOTIDE SEQUENCE [GENOMIC DNA] OF 1-92</scope>
</reference>
<protein>
    <recommendedName>
        <fullName evidence="2">Cytochrome b6-f complex subunit 4</fullName>
    </recommendedName>
    <alternativeName>
        <fullName evidence="2">17 kDa polypeptide</fullName>
    </alternativeName>
</protein>
<organism>
    <name type="scientific">Hordeum vulgare</name>
    <name type="common">Barley</name>
    <dbReference type="NCBI Taxonomy" id="4513"/>
    <lineage>
        <taxon>Eukaryota</taxon>
        <taxon>Viridiplantae</taxon>
        <taxon>Streptophyta</taxon>
        <taxon>Embryophyta</taxon>
        <taxon>Tracheophyta</taxon>
        <taxon>Spermatophyta</taxon>
        <taxon>Magnoliopsida</taxon>
        <taxon>Liliopsida</taxon>
        <taxon>Poales</taxon>
        <taxon>Poaceae</taxon>
        <taxon>BOP clade</taxon>
        <taxon>Pooideae</taxon>
        <taxon>Triticodae</taxon>
        <taxon>Triticeae</taxon>
        <taxon>Hordeinae</taxon>
        <taxon>Hordeum</taxon>
    </lineage>
</organism>
<gene>
    <name evidence="2" type="primary">petD</name>
</gene>
<dbReference type="EMBL" id="EF115541">
    <property type="protein sequence ID" value="ABK79442.1"/>
    <property type="molecule type" value="Genomic_DNA"/>
</dbReference>
<dbReference type="EMBL" id="X14107">
    <property type="protein sequence ID" value="CAA32268.1"/>
    <property type="status" value="ALT_SEQ"/>
    <property type="molecule type" value="Genomic_DNA"/>
</dbReference>
<dbReference type="EMBL" id="X14107">
    <property type="protein sequence ID" value="CAA32269.1"/>
    <property type="molecule type" value="Genomic_DNA"/>
</dbReference>
<dbReference type="PIR" id="JN0349">
    <property type="entry name" value="JN0349"/>
</dbReference>
<dbReference type="PIR" id="S04150">
    <property type="entry name" value="S04150"/>
</dbReference>
<dbReference type="RefSeq" id="YP_010144455.1">
    <molecule id="P12361-2"/>
    <property type="nucleotide sequence ID" value="NC_056985.1"/>
</dbReference>
<dbReference type="RefSeq" id="YP_874683.1">
    <property type="nucleotide sequence ID" value="NC_008590.1"/>
</dbReference>
<dbReference type="SMR" id="P12361"/>
<dbReference type="GeneID" id="4525080"/>
<dbReference type="GeneID" id="67140641"/>
<dbReference type="GO" id="GO:0009535">
    <property type="term" value="C:chloroplast thylakoid membrane"/>
    <property type="evidence" value="ECO:0007669"/>
    <property type="project" value="UniProtKB-SubCell"/>
</dbReference>
<dbReference type="GO" id="GO:0045158">
    <property type="term" value="F:electron transporter, transferring electrons within cytochrome b6/f complex of photosystem II activity"/>
    <property type="evidence" value="ECO:0007669"/>
    <property type="project" value="UniProtKB-UniRule"/>
</dbReference>
<dbReference type="GO" id="GO:0045156">
    <property type="term" value="F:electron transporter, transferring electrons within the cyclic electron transport pathway of photosynthesis activity"/>
    <property type="evidence" value="ECO:0007669"/>
    <property type="project" value="InterPro"/>
</dbReference>
<dbReference type="GO" id="GO:0016491">
    <property type="term" value="F:oxidoreductase activity"/>
    <property type="evidence" value="ECO:0007669"/>
    <property type="project" value="InterPro"/>
</dbReference>
<dbReference type="GO" id="GO:0009767">
    <property type="term" value="P:photosynthetic electron transport chain"/>
    <property type="evidence" value="ECO:0007669"/>
    <property type="project" value="InterPro"/>
</dbReference>
<dbReference type="CDD" id="cd00290">
    <property type="entry name" value="cytochrome_b_C"/>
    <property type="match status" value="1"/>
</dbReference>
<dbReference type="FunFam" id="1.10.287.980:FF:000001">
    <property type="entry name" value="Cytochrome b6-f complex subunit 4"/>
    <property type="match status" value="1"/>
</dbReference>
<dbReference type="FunFam" id="1.20.5.510:FF:000002">
    <property type="entry name" value="Cytochrome b6-f complex subunit 4"/>
    <property type="match status" value="1"/>
</dbReference>
<dbReference type="Gene3D" id="1.10.287.980">
    <property type="entry name" value="plastocyanin oxidoreductase"/>
    <property type="match status" value="1"/>
</dbReference>
<dbReference type="Gene3D" id="1.20.5.510">
    <property type="entry name" value="Single helix bin"/>
    <property type="match status" value="1"/>
</dbReference>
<dbReference type="HAMAP" id="MF_01344">
    <property type="entry name" value="Cytb6_f_subIV"/>
    <property type="match status" value="1"/>
</dbReference>
<dbReference type="InterPro" id="IPR005798">
    <property type="entry name" value="Cyt_b/b6_C"/>
</dbReference>
<dbReference type="InterPro" id="IPR036150">
    <property type="entry name" value="Cyt_b/b6_C_sf"/>
</dbReference>
<dbReference type="InterPro" id="IPR005870">
    <property type="entry name" value="Cyt_b6/f_cplx_suIV"/>
</dbReference>
<dbReference type="InterPro" id="IPR048260">
    <property type="entry name" value="Cytochrome_b_C_euk/bac"/>
</dbReference>
<dbReference type="NCBIfam" id="TIGR01156">
    <property type="entry name" value="cytb6_f_IV"/>
    <property type="match status" value="1"/>
</dbReference>
<dbReference type="PANTHER" id="PTHR19271">
    <property type="entry name" value="CYTOCHROME B"/>
    <property type="match status" value="1"/>
</dbReference>
<dbReference type="PANTHER" id="PTHR19271:SF40">
    <property type="entry name" value="CYTOCHROME B"/>
    <property type="match status" value="1"/>
</dbReference>
<dbReference type="Pfam" id="PF00032">
    <property type="entry name" value="Cytochrom_B_C"/>
    <property type="match status" value="1"/>
</dbReference>
<dbReference type="PIRSF" id="PIRSF000033">
    <property type="entry name" value="B6f_17K"/>
    <property type="match status" value="1"/>
</dbReference>
<dbReference type="SUPFAM" id="SSF81648">
    <property type="entry name" value="a domain/subunit of cytochrome bc1 complex (Ubiquinol-cytochrome c reductase)"/>
    <property type="match status" value="1"/>
</dbReference>
<dbReference type="PROSITE" id="PS51003">
    <property type="entry name" value="CYTB_CTER"/>
    <property type="match status" value="1"/>
</dbReference>
<accession>P12361</accession>
<accession>A1E9M1</accession>
<proteinExistence type="inferred from homology"/>
<feature type="chain" id="PRO_0000061863" description="Cytochrome b6-f complex subunit 4">
    <location>
        <begin position="1"/>
        <end position="160"/>
    </location>
</feature>
<feature type="transmembrane region" description="Helical" evidence="2">
    <location>
        <begin position="36"/>
        <end position="56"/>
    </location>
</feature>
<feature type="transmembrane region" description="Helical" evidence="2">
    <location>
        <begin position="95"/>
        <end position="115"/>
    </location>
</feature>
<feature type="transmembrane region" description="Helical" evidence="2">
    <location>
        <begin position="131"/>
        <end position="151"/>
    </location>
</feature>
<feature type="splice variant" id="VSP_019381" description="In isoform Long." evidence="3">
    <original>MGV</original>
    <variation>MSGSFGGWILKSSPIPI</variation>
    <location>
        <begin position="1"/>
        <end position="3"/>
    </location>
</feature>
<comment type="function">
    <text evidence="2">Component of the cytochrome b6-f complex, which mediates electron transfer between photosystem II (PSII) and photosystem I (PSI), cyclic electron flow around PSI, and state transitions.</text>
</comment>
<comment type="subunit">
    <text evidence="1">The 4 large subunits of the cytochrome b6-f complex are cytochrome b6, subunit IV (17 kDa polypeptide, petD), cytochrome f and the Rieske protein, while the 4 small subunits are petG, petL, petM and petN. The complex functions as a dimer (By similarity).</text>
</comment>
<comment type="subcellular location">
    <subcellularLocation>
        <location evidence="2">Plastid</location>
        <location evidence="2">Chloroplast thylakoid membrane</location>
        <topology evidence="2">Multi-pass membrane protein</topology>
    </subcellularLocation>
</comment>
<comment type="alternative products">
    <event type="alternative splicing"/>
    <isoform>
        <id>P12361-2</id>
        <name>Short</name>
        <sequence type="displayed"/>
    </isoform>
    <isoform>
        <id>P12361-1</id>
        <name>Long</name>
        <sequence type="described" ref="VSP_019381"/>
    </isoform>
</comment>
<comment type="miscellaneous">
    <text>A longer mRNA that is not produced by splicing has been shown to be transcribed in barley and maize. It is not known if this mRNA is translated.</text>
</comment>
<comment type="similarity">
    <text evidence="2">Belongs to the cytochrome b family. PetD subfamily.</text>
</comment>
<name>PETD_HORVU</name>
<sequence length="160" mass="17517">MGVTKKPDLNDPVLRAKLAKGMGHNYYGEPAWPNDLLYIFPVVILGTIACNVGLAVLEPSMIGEPADPFATPLEILPEWYFFPVFQILRTVPNKLLGVLLMVSVPTGLLTVPFLENVNKFQNPFRRPVATTVFLIGTVVALWLGIGATLPIDKSLTLGLF</sequence>
<keyword id="KW-0025">Alternative splicing</keyword>
<keyword id="KW-0150">Chloroplast</keyword>
<keyword id="KW-0249">Electron transport</keyword>
<keyword id="KW-0472">Membrane</keyword>
<keyword id="KW-0602">Photosynthesis</keyword>
<keyword id="KW-0934">Plastid</keyword>
<keyword id="KW-0793">Thylakoid</keyword>
<keyword id="KW-0812">Transmembrane</keyword>
<keyword id="KW-1133">Transmembrane helix</keyword>
<keyword id="KW-0813">Transport</keyword>
<geneLocation type="chloroplast"/>